<dbReference type="EMBL" id="AP005672">
    <property type="protein sequence ID" value="BAC85074.1"/>
    <property type="molecule type" value="Genomic_DNA"/>
</dbReference>
<dbReference type="RefSeq" id="NP_904224.1">
    <property type="nucleotide sequence ID" value="NC_005087.2"/>
</dbReference>
<dbReference type="RefSeq" id="YP_009477554.1">
    <property type="nucleotide sequence ID" value="NC_037465.1"/>
</dbReference>
<dbReference type="SMR" id="Q6YXJ8"/>
<dbReference type="FunCoup" id="Q6YXJ8">
    <property type="interactions" value="1630"/>
</dbReference>
<dbReference type="STRING" id="3218.Q6YXJ8"/>
<dbReference type="GeneID" id="2546746"/>
<dbReference type="GeneID" id="36487188"/>
<dbReference type="KEGG" id="ppp:2546746"/>
<dbReference type="InParanoid" id="Q6YXJ8"/>
<dbReference type="OrthoDB" id="535480at2759"/>
<dbReference type="Proteomes" id="UP000006727">
    <property type="component" value="Chloroplast"/>
</dbReference>
<dbReference type="GO" id="GO:0009507">
    <property type="term" value="C:chloroplast"/>
    <property type="evidence" value="ECO:0007669"/>
    <property type="project" value="UniProtKB-SubCell"/>
</dbReference>
<dbReference type="GO" id="GO:1990904">
    <property type="term" value="C:ribonucleoprotein complex"/>
    <property type="evidence" value="ECO:0007669"/>
    <property type="project" value="UniProtKB-KW"/>
</dbReference>
<dbReference type="GO" id="GO:0005840">
    <property type="term" value="C:ribosome"/>
    <property type="evidence" value="ECO:0007669"/>
    <property type="project" value="UniProtKB-KW"/>
</dbReference>
<dbReference type="GO" id="GO:0019843">
    <property type="term" value="F:rRNA binding"/>
    <property type="evidence" value="ECO:0007669"/>
    <property type="project" value="UniProtKB-UniRule"/>
</dbReference>
<dbReference type="GO" id="GO:0003735">
    <property type="term" value="F:structural constituent of ribosome"/>
    <property type="evidence" value="ECO:0000318"/>
    <property type="project" value="GO_Central"/>
</dbReference>
<dbReference type="GO" id="GO:0006412">
    <property type="term" value="P:translation"/>
    <property type="evidence" value="ECO:0000318"/>
    <property type="project" value="GO_Central"/>
</dbReference>
<dbReference type="FunFam" id="3.30.420.80:FF:000003">
    <property type="entry name" value="30S ribosomal protein S11, chloroplastic"/>
    <property type="match status" value="1"/>
</dbReference>
<dbReference type="Gene3D" id="3.30.420.80">
    <property type="entry name" value="Ribosomal protein S11"/>
    <property type="match status" value="1"/>
</dbReference>
<dbReference type="HAMAP" id="MF_01310">
    <property type="entry name" value="Ribosomal_uS11"/>
    <property type="match status" value="1"/>
</dbReference>
<dbReference type="InterPro" id="IPR001971">
    <property type="entry name" value="Ribosomal_uS11"/>
</dbReference>
<dbReference type="InterPro" id="IPR019981">
    <property type="entry name" value="Ribosomal_uS11_bac-type"/>
</dbReference>
<dbReference type="InterPro" id="IPR018102">
    <property type="entry name" value="Ribosomal_uS11_CS"/>
</dbReference>
<dbReference type="InterPro" id="IPR036967">
    <property type="entry name" value="Ribosomal_uS11_sf"/>
</dbReference>
<dbReference type="NCBIfam" id="NF003698">
    <property type="entry name" value="PRK05309.1"/>
    <property type="match status" value="1"/>
</dbReference>
<dbReference type="NCBIfam" id="TIGR03632">
    <property type="entry name" value="uS11_bact"/>
    <property type="match status" value="1"/>
</dbReference>
<dbReference type="PANTHER" id="PTHR11759">
    <property type="entry name" value="40S RIBOSOMAL PROTEIN S14/30S RIBOSOMAL PROTEIN S11"/>
    <property type="match status" value="1"/>
</dbReference>
<dbReference type="Pfam" id="PF00411">
    <property type="entry name" value="Ribosomal_S11"/>
    <property type="match status" value="1"/>
</dbReference>
<dbReference type="PIRSF" id="PIRSF002131">
    <property type="entry name" value="Ribosomal_S11"/>
    <property type="match status" value="1"/>
</dbReference>
<dbReference type="SUPFAM" id="SSF53137">
    <property type="entry name" value="Translational machinery components"/>
    <property type="match status" value="1"/>
</dbReference>
<dbReference type="PROSITE" id="PS00054">
    <property type="entry name" value="RIBOSOMAL_S11"/>
    <property type="match status" value="1"/>
</dbReference>
<keyword id="KW-0150">Chloroplast</keyword>
<keyword id="KW-0934">Plastid</keyword>
<keyword id="KW-1185">Reference proteome</keyword>
<keyword id="KW-0687">Ribonucleoprotein</keyword>
<keyword id="KW-0689">Ribosomal protein</keyword>
<keyword id="KW-0694">RNA-binding</keyword>
<keyword id="KW-0699">rRNA-binding</keyword>
<name>RR11_PHYPA</name>
<feature type="chain" id="PRO_0000123320" description="Small ribosomal subunit protein uS11c">
    <location>
        <begin position="1"/>
        <end position="130"/>
    </location>
</feature>
<sequence length="130" mass="14161">MAKLIKKISLRKGKRRIPKGVIHIQASFNNTIVTVTDIRGQVVFWSSAGACGFKGAKKSTPFAAQTAAENAIRVLIDQGMKQAEVMISGPGPGRDTALRAIRRSGVILNFVRDVTPMPHNGCRPPKKRRV</sequence>
<protein>
    <recommendedName>
        <fullName evidence="1">Small ribosomal subunit protein uS11c</fullName>
    </recommendedName>
    <alternativeName>
        <fullName evidence="2">30S ribosomal protein S11, chloroplastic</fullName>
    </alternativeName>
</protein>
<proteinExistence type="inferred from homology"/>
<reference key="1">
    <citation type="journal article" date="2003" name="Nucleic Acids Res.">
        <title>Complete chloroplast DNA sequence of the moss Physcomitrella patens: evidence for the loss and relocation of rpoA from the chloroplast to the nucleus.</title>
        <authorList>
            <person name="Sugiura C."/>
            <person name="Kobayashi Y."/>
            <person name="Setsuyuki A."/>
            <person name="Sugita C."/>
            <person name="Sugita M."/>
        </authorList>
    </citation>
    <scope>NUCLEOTIDE SEQUENCE [LARGE SCALE GENOMIC DNA]</scope>
    <source>
        <strain>cv. Gransden 2004</strain>
    </source>
</reference>
<gene>
    <name evidence="1" type="primary">rps11</name>
</gene>
<geneLocation type="chloroplast"/>
<evidence type="ECO:0000255" key="1">
    <source>
        <dbReference type="HAMAP-Rule" id="MF_01310"/>
    </source>
</evidence>
<evidence type="ECO:0000305" key="2"/>
<accession>Q6YXJ8</accession>
<comment type="subunit">
    <text evidence="1">Part of the 30S ribosomal subunit.</text>
</comment>
<comment type="subcellular location">
    <subcellularLocation>
        <location>Plastid</location>
        <location>Chloroplast</location>
    </subcellularLocation>
</comment>
<comment type="similarity">
    <text evidence="1">Belongs to the universal ribosomal protein uS11 family.</text>
</comment>
<organism>
    <name type="scientific">Physcomitrium patens</name>
    <name type="common">Spreading-leaved earth moss</name>
    <name type="synonym">Physcomitrella patens</name>
    <dbReference type="NCBI Taxonomy" id="3218"/>
    <lineage>
        <taxon>Eukaryota</taxon>
        <taxon>Viridiplantae</taxon>
        <taxon>Streptophyta</taxon>
        <taxon>Embryophyta</taxon>
        <taxon>Bryophyta</taxon>
        <taxon>Bryophytina</taxon>
        <taxon>Bryopsida</taxon>
        <taxon>Funariidae</taxon>
        <taxon>Funariales</taxon>
        <taxon>Funariaceae</taxon>
        <taxon>Physcomitrium</taxon>
    </lineage>
</organism>